<proteinExistence type="inferred from homology"/>
<protein>
    <recommendedName>
        <fullName evidence="1">ATP phosphoribosyltransferase regulatory subunit</fullName>
    </recommendedName>
</protein>
<comment type="function">
    <text evidence="1">Required for the first step of histidine biosynthesis. May allow the feedback regulation of ATP phosphoribosyltransferase activity by histidine.</text>
</comment>
<comment type="pathway">
    <text evidence="1">Amino-acid biosynthesis; L-histidine biosynthesis; L-histidine from 5-phospho-alpha-D-ribose 1-diphosphate: step 1/9.</text>
</comment>
<comment type="subunit">
    <text evidence="1">Heteromultimer composed of HisG and HisZ subunits.</text>
</comment>
<comment type="subcellular location">
    <subcellularLocation>
        <location evidence="1">Cytoplasm</location>
    </subcellularLocation>
</comment>
<comment type="miscellaneous">
    <text>This function is generally fulfilled by the C-terminal part of HisG, which is missing in some bacteria such as this one.</text>
</comment>
<comment type="similarity">
    <text evidence="1">Belongs to the class-II aminoacyl-tRNA synthetase family. HisZ subfamily.</text>
</comment>
<accession>C3L9Q3</accession>
<organism>
    <name type="scientific">Bacillus anthracis (strain CDC 684 / NRRL 3495)</name>
    <dbReference type="NCBI Taxonomy" id="568206"/>
    <lineage>
        <taxon>Bacteria</taxon>
        <taxon>Bacillati</taxon>
        <taxon>Bacillota</taxon>
        <taxon>Bacilli</taxon>
        <taxon>Bacillales</taxon>
        <taxon>Bacillaceae</taxon>
        <taxon>Bacillus</taxon>
        <taxon>Bacillus cereus group</taxon>
    </lineage>
</organism>
<dbReference type="EMBL" id="CP001215">
    <property type="protein sequence ID" value="ACP16083.1"/>
    <property type="molecule type" value="Genomic_DNA"/>
</dbReference>
<dbReference type="RefSeq" id="WP_000170328.1">
    <property type="nucleotide sequence ID" value="NC_012581.1"/>
</dbReference>
<dbReference type="SMR" id="C3L9Q3"/>
<dbReference type="GeneID" id="45021403"/>
<dbReference type="KEGG" id="bah:BAMEG_3171"/>
<dbReference type="HOGENOM" id="CLU_025113_0_0_9"/>
<dbReference type="UniPathway" id="UPA00031">
    <property type="reaction ID" value="UER00006"/>
</dbReference>
<dbReference type="GO" id="GO:0005737">
    <property type="term" value="C:cytoplasm"/>
    <property type="evidence" value="ECO:0007669"/>
    <property type="project" value="UniProtKB-SubCell"/>
</dbReference>
<dbReference type="GO" id="GO:0140096">
    <property type="term" value="F:catalytic activity, acting on a protein"/>
    <property type="evidence" value="ECO:0007669"/>
    <property type="project" value="UniProtKB-ARBA"/>
</dbReference>
<dbReference type="GO" id="GO:0004821">
    <property type="term" value="F:histidine-tRNA ligase activity"/>
    <property type="evidence" value="ECO:0007669"/>
    <property type="project" value="TreeGrafter"/>
</dbReference>
<dbReference type="GO" id="GO:0016740">
    <property type="term" value="F:transferase activity"/>
    <property type="evidence" value="ECO:0007669"/>
    <property type="project" value="UniProtKB-ARBA"/>
</dbReference>
<dbReference type="GO" id="GO:0006427">
    <property type="term" value="P:histidyl-tRNA aminoacylation"/>
    <property type="evidence" value="ECO:0007669"/>
    <property type="project" value="TreeGrafter"/>
</dbReference>
<dbReference type="GO" id="GO:0000105">
    <property type="term" value="P:L-histidine biosynthetic process"/>
    <property type="evidence" value="ECO:0007669"/>
    <property type="project" value="UniProtKB-UniRule"/>
</dbReference>
<dbReference type="CDD" id="cd00773">
    <property type="entry name" value="HisRS-like_core"/>
    <property type="match status" value="1"/>
</dbReference>
<dbReference type="FunFam" id="3.30.930.10:FF:000060">
    <property type="entry name" value="ATP phosphoribosyltransferase regulatory subunit"/>
    <property type="match status" value="1"/>
</dbReference>
<dbReference type="Gene3D" id="3.30.930.10">
    <property type="entry name" value="Bira Bifunctional Protein, Domain 2"/>
    <property type="match status" value="1"/>
</dbReference>
<dbReference type="HAMAP" id="MF_00125">
    <property type="entry name" value="HisZ"/>
    <property type="match status" value="1"/>
</dbReference>
<dbReference type="InterPro" id="IPR006195">
    <property type="entry name" value="aa-tRNA-synth_II"/>
</dbReference>
<dbReference type="InterPro" id="IPR045864">
    <property type="entry name" value="aa-tRNA-synth_II/BPL/LPL"/>
</dbReference>
<dbReference type="InterPro" id="IPR041715">
    <property type="entry name" value="HisRS-like_core"/>
</dbReference>
<dbReference type="InterPro" id="IPR004516">
    <property type="entry name" value="HisRS/HisZ"/>
</dbReference>
<dbReference type="InterPro" id="IPR004517">
    <property type="entry name" value="HisZ"/>
</dbReference>
<dbReference type="NCBIfam" id="TIGR00443">
    <property type="entry name" value="hisZ_biosyn_reg"/>
    <property type="match status" value="1"/>
</dbReference>
<dbReference type="NCBIfam" id="NF008938">
    <property type="entry name" value="PRK12292.1-6"/>
    <property type="match status" value="1"/>
</dbReference>
<dbReference type="PANTHER" id="PTHR43707:SF6">
    <property type="entry name" value="ATP PHOSPHORIBOSYLTRANSFERASE REGULATORY SUBUNIT"/>
    <property type="match status" value="1"/>
</dbReference>
<dbReference type="PANTHER" id="PTHR43707">
    <property type="entry name" value="HISTIDYL-TRNA SYNTHETASE"/>
    <property type="match status" value="1"/>
</dbReference>
<dbReference type="Pfam" id="PF13393">
    <property type="entry name" value="tRNA-synt_His"/>
    <property type="match status" value="1"/>
</dbReference>
<dbReference type="PIRSF" id="PIRSF001549">
    <property type="entry name" value="His-tRNA_synth"/>
    <property type="match status" value="1"/>
</dbReference>
<dbReference type="SUPFAM" id="SSF55681">
    <property type="entry name" value="Class II aaRS and biotin synthetases"/>
    <property type="match status" value="1"/>
</dbReference>
<dbReference type="PROSITE" id="PS50862">
    <property type="entry name" value="AA_TRNA_LIGASE_II"/>
    <property type="match status" value="1"/>
</dbReference>
<name>HISZ_BACAC</name>
<evidence type="ECO:0000255" key="1">
    <source>
        <dbReference type="HAMAP-Rule" id="MF_00125"/>
    </source>
</evidence>
<keyword id="KW-0028">Amino-acid biosynthesis</keyword>
<keyword id="KW-0963">Cytoplasm</keyword>
<keyword id="KW-0368">Histidine biosynthesis</keyword>
<gene>
    <name evidence="1" type="primary">hisZ</name>
    <name type="ordered locus">BAMEG_3171</name>
</gene>
<feature type="chain" id="PRO_1000122661" description="ATP phosphoribosyltransferase regulatory subunit">
    <location>
        <begin position="1"/>
        <end position="420"/>
    </location>
</feature>
<sequence>MTKWKRANPNGTRDYLFEECTLIEEVEQKLRRTFLERGYEEIRTPTIEFYDVFAFQSRPIDEEKMYKFFDEKGRIIVLRPDMTIPLARVVGTQRCDTPLKVTYSGNVFRANESLAGKYNEIVQSGIEVIGIDNVRAEIECVISVIQSLQKLRVQSFTIEIGQVQLYKCIVKKLSIHEEEEKFLRTYIESKNYASLSNFIRDKKLDRCDETVKLLEKLPRLFGNLEVIEEAEKLASSNEMKMAITRVKEIYEAIEKLGYGSYISIDLGTIQHLDYYTGVIFKGYIYEIGEEIVSGGRYDELIGNFGEMLPAVGLAVQVNQIVKALQEQQEPYERKRIDIMIHYELNRLAEAERLRNLLQKDGKKVALSLFSNLNDTFQFARKNQIVTVVEAKSESLVEYVWKEKWVVQKEGETSCVTFKLR</sequence>
<reference key="1">
    <citation type="submission" date="2008-10" db="EMBL/GenBank/DDBJ databases">
        <title>Genome sequence of Bacillus anthracis str. CDC 684.</title>
        <authorList>
            <person name="Dodson R.J."/>
            <person name="Munk A.C."/>
            <person name="Brettin T."/>
            <person name="Bruce D."/>
            <person name="Detter C."/>
            <person name="Tapia R."/>
            <person name="Han C."/>
            <person name="Sutton G."/>
            <person name="Sims D."/>
        </authorList>
    </citation>
    <scope>NUCLEOTIDE SEQUENCE [LARGE SCALE GENOMIC DNA]</scope>
    <source>
        <strain>CDC 684 / NRRL 3495</strain>
    </source>
</reference>